<reference key="1">
    <citation type="journal article" date="1998" name="Biochem. Biophys. Res. Commun.">
        <title>Characterization of selachian egg case collagen.</title>
        <authorList>
            <person name="Luong T.-T."/>
            <person name="Boutillon M.-M."/>
            <person name="Garrone R."/>
            <person name="Knight D.P."/>
        </authorList>
    </citation>
    <scope>PROTEIN SEQUENCE</scope>
    <source>
        <tissue>Oviduct</tissue>
    </source>
</reference>
<dbReference type="GO" id="GO:0005581">
    <property type="term" value="C:collagen trimer"/>
    <property type="evidence" value="ECO:0007669"/>
    <property type="project" value="UniProtKB-KW"/>
</dbReference>
<dbReference type="GO" id="GO:0031012">
    <property type="term" value="C:extracellular matrix"/>
    <property type="evidence" value="ECO:0007669"/>
    <property type="project" value="TreeGrafter"/>
</dbReference>
<dbReference type="GO" id="GO:0005615">
    <property type="term" value="C:extracellular space"/>
    <property type="evidence" value="ECO:0007669"/>
    <property type="project" value="TreeGrafter"/>
</dbReference>
<dbReference type="GO" id="GO:0030020">
    <property type="term" value="F:extracellular matrix structural constituent conferring tensile strength"/>
    <property type="evidence" value="ECO:0007669"/>
    <property type="project" value="TreeGrafter"/>
</dbReference>
<dbReference type="GO" id="GO:0030198">
    <property type="term" value="P:extracellular matrix organization"/>
    <property type="evidence" value="ECO:0007669"/>
    <property type="project" value="TreeGrafter"/>
</dbReference>
<dbReference type="InterPro" id="IPR050149">
    <property type="entry name" value="Collagen_superfamily"/>
</dbReference>
<dbReference type="PANTHER" id="PTHR24023:SF1112">
    <property type="entry name" value="COL_CUTICLE_N DOMAIN-CONTAINING PROTEIN-RELATED"/>
    <property type="match status" value="1"/>
</dbReference>
<dbReference type="PANTHER" id="PTHR24023">
    <property type="entry name" value="COLLAGEN ALPHA"/>
    <property type="match status" value="1"/>
</dbReference>
<sequence>VYMSGXGKPPDVTGGEAHVAGKTVTYTXNPGYIMIGGAXLTYETGSLGGLPDIDDGKSFYGLLGKVPNRVGNSVTYSSQHGYYLLGKKTLTRLNHVGLPGGKPSALDNGMATIVXRXAIYKGNHGFYLVLPAGYPGTPGTPGPRGGPGDPGMPGEPGVGFPGVPGFPGSNGRNGMNGGYPGPKGEDGDIGPMGGKGEPGDPGLPGEYGV</sequence>
<keyword id="KW-0176">Collagen</keyword>
<keyword id="KW-0903">Direct protein sequencing</keyword>
<keyword id="KW-0677">Repeat</keyword>
<comment type="function">
    <text>Major component of the egg case wall which is secreted by the oviduct. The egg case combines mechanical strength and toughness with high permeability to small molecules and ions.</text>
</comment>
<comment type="caution">
    <text evidence="2">The order of the peptides shown is unknown.</text>
</comment>
<proteinExistence type="evidence at protein level"/>
<protein>
    <recommendedName>
        <fullName>Egg case collagen</fullName>
    </recommendedName>
</protein>
<evidence type="ECO:0000256" key="1">
    <source>
        <dbReference type="SAM" id="MobiDB-lite"/>
    </source>
</evidence>
<evidence type="ECO:0000305" key="2"/>
<feature type="chain" id="PRO_0000059395" description="Egg case collagen">
    <location>
        <begin position="1"/>
        <end position="209" status="greater than"/>
    </location>
</feature>
<feature type="region of interest" description="Nonhelical region">
    <location>
        <begin position="1"/>
        <end position="129" status="greater than"/>
    </location>
</feature>
<feature type="region of interest" description="Triple-helical region">
    <location>
        <begin position="130" status="less than"/>
        <end position="209" status="greater than"/>
    </location>
</feature>
<feature type="region of interest" description="Disordered" evidence="1">
    <location>
        <begin position="138"/>
        <end position="209"/>
    </location>
</feature>
<feature type="compositionally biased region" description="Gly residues" evidence="1">
    <location>
        <begin position="142"/>
        <end position="162"/>
    </location>
</feature>
<feature type="non-consecutive residues" evidence="2">
    <location>
        <begin position="40"/>
        <end position="41"/>
    </location>
</feature>
<feature type="non-consecutive residues" evidence="2">
    <location>
        <begin position="67"/>
        <end position="68"/>
    </location>
</feature>
<feature type="non-consecutive residues" evidence="2">
    <location>
        <begin position="94"/>
        <end position="95"/>
    </location>
</feature>
<feature type="non-consecutive residues" evidence="2">
    <location>
        <begin position="129"/>
        <end position="130"/>
    </location>
</feature>
<feature type="non-consecutive residues" evidence="2">
    <location>
        <begin position="144"/>
        <end position="145"/>
    </location>
</feature>
<feature type="non-consecutive residues" evidence="2">
    <location>
        <begin position="157"/>
        <end position="158"/>
    </location>
</feature>
<feature type="non-consecutive residues" evidence="2">
    <location>
        <begin position="177"/>
        <end position="178"/>
    </location>
</feature>
<feature type="non-terminal residue">
    <location>
        <position position="209"/>
    </location>
</feature>
<name>COEC_SCYCA</name>
<organism>
    <name type="scientific">Scyliorhinus canicula</name>
    <name type="common">Small-spotted catshark</name>
    <name type="synonym">Squalus canicula</name>
    <dbReference type="NCBI Taxonomy" id="7830"/>
    <lineage>
        <taxon>Eukaryota</taxon>
        <taxon>Metazoa</taxon>
        <taxon>Chordata</taxon>
        <taxon>Craniata</taxon>
        <taxon>Vertebrata</taxon>
        <taxon>Chondrichthyes</taxon>
        <taxon>Elasmobranchii</taxon>
        <taxon>Galeomorphii</taxon>
        <taxon>Galeoidea</taxon>
        <taxon>Carcharhiniformes</taxon>
        <taxon>Scyliorhinidae</taxon>
        <taxon>Scyliorhinus</taxon>
    </lineage>
</organism>
<accession>P81130</accession>